<gene>
    <name evidence="1" type="primary">Gpat3</name>
    <name type="synonym">Agpat9</name>
</gene>
<sequence>MEGADLAVKLLSTWLTLVGGLILLPSAFGLSLGISEIYMKILVKTLEWATLRIQKGAPKESALKNSASVGIIQRDESPMEKGLSGLRGRDFELSDVFYFSKKGLEAIVEDEVTQRFSSEELVSWNLLTRTNVNFQYISPRLTMVWVLGVLVRYCFLLPLRVTLAFIGISLLIIGTTLVGQLPDSSLKNWLSELVHLTCCRICVRSLSGTIHYHNKQYRPQKGGICVANHTSPIDVLILATDGCYAMVGQVHGGLMGIIQRAMVKACPHVWFERSEIKDRHLVTKRLKEHIADKKKLPILIFPEGTCINNTSVMMFKKGSFEIGGTIYPVAIKYNPQFGDAFWNSSKYNLVSYLLRIMTSWAIVCDVWYMPPMTREEGEDAVQFANRVKSAIAVQGGLTELPWDGGLKRAKVKDTFKEEQQKNYSKMIVGNGSPNLARD</sequence>
<organism>
    <name type="scientific">Mus musculus</name>
    <name type="common">Mouse</name>
    <dbReference type="NCBI Taxonomy" id="10090"/>
    <lineage>
        <taxon>Eukaryota</taxon>
        <taxon>Metazoa</taxon>
        <taxon>Chordata</taxon>
        <taxon>Craniata</taxon>
        <taxon>Vertebrata</taxon>
        <taxon>Euteleostomi</taxon>
        <taxon>Mammalia</taxon>
        <taxon>Eutheria</taxon>
        <taxon>Euarchontoglires</taxon>
        <taxon>Glires</taxon>
        <taxon>Rodentia</taxon>
        <taxon>Myomorpha</taxon>
        <taxon>Muroidea</taxon>
        <taxon>Muridae</taxon>
        <taxon>Murinae</taxon>
        <taxon>Mus</taxon>
        <taxon>Mus</taxon>
    </lineage>
</organism>
<name>GPAT3_MOUSE</name>
<keyword id="KW-0012">Acyltransferase</keyword>
<keyword id="KW-0256">Endoplasmic reticulum</keyword>
<keyword id="KW-0444">Lipid biosynthesis</keyword>
<keyword id="KW-0443">Lipid metabolism</keyword>
<keyword id="KW-0472">Membrane</keyword>
<keyword id="KW-0594">Phospholipid biosynthesis</keyword>
<keyword id="KW-1208">Phospholipid metabolism</keyword>
<keyword id="KW-0597">Phosphoprotein</keyword>
<keyword id="KW-1185">Reference proteome</keyword>
<keyword id="KW-0808">Transferase</keyword>
<keyword id="KW-0812">Transmembrane</keyword>
<keyword id="KW-1133">Transmembrane helix</keyword>
<protein>
    <recommendedName>
        <fullName evidence="1">Glycerol-3-phosphate acyltransferase 3</fullName>
        <shortName>GPAT-3</shortName>
        <ecNumber evidence="5">2.3.1.15</ecNumber>
    </recommendedName>
    <alternativeName>
        <fullName evidence="1">1-acyl-sn-glycerol-3-phosphate O-acyltransferase 10</fullName>
        <shortName evidence="1">AGPAT 10</shortName>
    </alternativeName>
    <alternativeName>
        <fullName>1-acyl-sn-glycerol-3-phosphate O-acyltransferase 9</fullName>
        <shortName>1-AGP acyltransferase 9</shortName>
        <shortName>1-AGPAT 9</shortName>
        <ecNumber evidence="1">2.3.1.51</ecNumber>
    </alternativeName>
    <alternativeName>
        <fullName evidence="6">Acyl-CoA:glycerol-3-phosphate acyltransferase 3</fullName>
        <shortName>mGPAT3</shortName>
    </alternativeName>
    <alternativeName>
        <fullName>Lysophosphatidic acid acyltransferase theta</fullName>
        <shortName>LPAAT-theta</shortName>
    </alternativeName>
</protein>
<dbReference type="EC" id="2.3.1.15" evidence="5"/>
<dbReference type="EC" id="2.3.1.51" evidence="1"/>
<dbReference type="EMBL" id="AK030171">
    <property type="protein sequence ID" value="BAC26820.1"/>
    <property type="molecule type" value="mRNA"/>
</dbReference>
<dbReference type="EMBL" id="AK160261">
    <property type="protein sequence ID" value="BAE35719.1"/>
    <property type="molecule type" value="mRNA"/>
</dbReference>
<dbReference type="EMBL" id="AK138410">
    <property type="protein sequence ID" value="BAE23647.1"/>
    <property type="molecule type" value="mRNA"/>
</dbReference>
<dbReference type="EMBL" id="BC096769">
    <property type="protein sequence ID" value="AAH96769.1"/>
    <property type="molecule type" value="mRNA"/>
</dbReference>
<dbReference type="EMBL" id="BC138228">
    <property type="protein sequence ID" value="AAI38229.1"/>
    <property type="molecule type" value="mRNA"/>
</dbReference>
<dbReference type="EMBL" id="BC145669">
    <property type="protein sequence ID" value="AAI45670.1"/>
    <property type="molecule type" value="mRNA"/>
</dbReference>
<dbReference type="CCDS" id="CCDS19470.1"/>
<dbReference type="RefSeq" id="NP_766303.1">
    <property type="nucleotide sequence ID" value="NM_172715.3"/>
</dbReference>
<dbReference type="RefSeq" id="XP_011247733.1">
    <property type="nucleotide sequence ID" value="XM_011249431.2"/>
</dbReference>
<dbReference type="RefSeq" id="XP_011247734.1">
    <property type="nucleotide sequence ID" value="XM_011249432.1"/>
</dbReference>
<dbReference type="RefSeq" id="XP_011247735.1">
    <property type="nucleotide sequence ID" value="XM_011249433.3"/>
</dbReference>
<dbReference type="FunCoup" id="Q8C0N2">
    <property type="interactions" value="1537"/>
</dbReference>
<dbReference type="STRING" id="10090.ENSMUSP00000108508"/>
<dbReference type="SwissLipids" id="SLP:000000103"/>
<dbReference type="iPTMnet" id="Q8C0N2"/>
<dbReference type="PhosphoSitePlus" id="Q8C0N2"/>
<dbReference type="jPOST" id="Q8C0N2"/>
<dbReference type="PaxDb" id="10090-ENSMUSP00000031255"/>
<dbReference type="PeptideAtlas" id="Q8C0N2"/>
<dbReference type="ProteomicsDB" id="267755"/>
<dbReference type="Antibodypedia" id="25231">
    <property type="antibodies" value="217 antibodies from 27 providers"/>
</dbReference>
<dbReference type="DNASU" id="231510"/>
<dbReference type="Ensembl" id="ENSMUST00000031255.15">
    <property type="protein sequence ID" value="ENSMUSP00000031255.9"/>
    <property type="gene ID" value="ENSMUSG00000029314.15"/>
</dbReference>
<dbReference type="Ensembl" id="ENSMUST00000092990.4">
    <property type="protein sequence ID" value="ENSMUSP00000090667.4"/>
    <property type="gene ID" value="ENSMUSG00000029314.15"/>
</dbReference>
<dbReference type="Ensembl" id="ENSMUST00000112887.8">
    <property type="protein sequence ID" value="ENSMUSP00000108508.2"/>
    <property type="gene ID" value="ENSMUSG00000029314.15"/>
</dbReference>
<dbReference type="GeneID" id="231510"/>
<dbReference type="KEGG" id="mmu:231510"/>
<dbReference type="UCSC" id="uc008yih.1">
    <property type="organism name" value="mouse"/>
</dbReference>
<dbReference type="AGR" id="MGI:3603816"/>
<dbReference type="CTD" id="84803"/>
<dbReference type="MGI" id="MGI:3603816">
    <property type="gene designation" value="Gpat3"/>
</dbReference>
<dbReference type="VEuPathDB" id="HostDB:ENSMUSG00000029314"/>
<dbReference type="eggNOG" id="KOG2898">
    <property type="taxonomic scope" value="Eukaryota"/>
</dbReference>
<dbReference type="GeneTree" id="ENSGT01030000234574"/>
<dbReference type="HOGENOM" id="CLU_031080_0_1_1"/>
<dbReference type="InParanoid" id="Q8C0N2"/>
<dbReference type="OMA" id="PPMVREE"/>
<dbReference type="OrthoDB" id="10051137at2759"/>
<dbReference type="PhylomeDB" id="Q8C0N2"/>
<dbReference type="TreeFam" id="TF315039"/>
<dbReference type="BRENDA" id="2.3.1.15">
    <property type="organism ID" value="3474"/>
</dbReference>
<dbReference type="Reactome" id="R-MMU-1483166">
    <property type="pathway name" value="Synthesis of PA"/>
</dbReference>
<dbReference type="UniPathway" id="UPA00282"/>
<dbReference type="UniPathway" id="UPA00557">
    <property type="reaction ID" value="UER00612"/>
</dbReference>
<dbReference type="BioGRID-ORCS" id="231510">
    <property type="hits" value="1 hit in 80 CRISPR screens"/>
</dbReference>
<dbReference type="ChiTaRS" id="Gpat3">
    <property type="organism name" value="mouse"/>
</dbReference>
<dbReference type="PRO" id="PR:Q8C0N2"/>
<dbReference type="Proteomes" id="UP000000589">
    <property type="component" value="Chromosome 5"/>
</dbReference>
<dbReference type="RNAct" id="Q8C0N2">
    <property type="molecule type" value="protein"/>
</dbReference>
<dbReference type="Bgee" id="ENSMUSG00000029314">
    <property type="expression patterns" value="Expressed in small intestine Peyer's patch and 140 other cell types or tissues"/>
</dbReference>
<dbReference type="ExpressionAtlas" id="Q8C0N2">
    <property type="expression patterns" value="baseline and differential"/>
</dbReference>
<dbReference type="GO" id="GO:0005783">
    <property type="term" value="C:endoplasmic reticulum"/>
    <property type="evidence" value="ECO:0000314"/>
    <property type="project" value="UniProtKB"/>
</dbReference>
<dbReference type="GO" id="GO:0005789">
    <property type="term" value="C:endoplasmic reticulum membrane"/>
    <property type="evidence" value="ECO:0000250"/>
    <property type="project" value="UniProtKB"/>
</dbReference>
<dbReference type="GO" id="GO:0003841">
    <property type="term" value="F:1-acylglycerol-3-phosphate O-acyltransferase activity"/>
    <property type="evidence" value="ECO:0000250"/>
    <property type="project" value="UniProtKB"/>
</dbReference>
<dbReference type="GO" id="GO:0004366">
    <property type="term" value="F:glycerol-3-phosphate O-acyltransferase activity"/>
    <property type="evidence" value="ECO:0000314"/>
    <property type="project" value="UniProtKB"/>
</dbReference>
<dbReference type="GO" id="GO:0016024">
    <property type="term" value="P:CDP-diacylglycerol biosynthetic process"/>
    <property type="evidence" value="ECO:0007669"/>
    <property type="project" value="UniProtKB-UniPathway"/>
</dbReference>
<dbReference type="GO" id="GO:0006072">
    <property type="term" value="P:glycerol-3-phosphate metabolic process"/>
    <property type="evidence" value="ECO:0000314"/>
    <property type="project" value="UniProtKB"/>
</dbReference>
<dbReference type="GO" id="GO:0008654">
    <property type="term" value="P:phospholipid biosynthetic process"/>
    <property type="evidence" value="ECO:0000314"/>
    <property type="project" value="UniProtKB"/>
</dbReference>
<dbReference type="GO" id="GO:0032006">
    <property type="term" value="P:regulation of TOR signaling"/>
    <property type="evidence" value="ECO:0007669"/>
    <property type="project" value="Ensembl"/>
</dbReference>
<dbReference type="GO" id="GO:0019432">
    <property type="term" value="P:triglyceride biosynthetic process"/>
    <property type="evidence" value="ECO:0000314"/>
    <property type="project" value="UniProtKB"/>
</dbReference>
<dbReference type="CDD" id="cd07991">
    <property type="entry name" value="LPLAT_LPCAT1-like"/>
    <property type="match status" value="1"/>
</dbReference>
<dbReference type="InterPro" id="IPR045252">
    <property type="entry name" value="LPCAT1-like"/>
</dbReference>
<dbReference type="InterPro" id="IPR002123">
    <property type="entry name" value="Plipid/glycerol_acylTrfase"/>
</dbReference>
<dbReference type="PANTHER" id="PTHR23063:SF10">
    <property type="entry name" value="GLYCEROL-3-PHOSPHATE ACYLTRANSFERASE 3"/>
    <property type="match status" value="1"/>
</dbReference>
<dbReference type="PANTHER" id="PTHR23063">
    <property type="entry name" value="PHOSPHOLIPID ACYLTRANSFERASE"/>
    <property type="match status" value="1"/>
</dbReference>
<dbReference type="Pfam" id="PF01553">
    <property type="entry name" value="Acyltransferase"/>
    <property type="match status" value="1"/>
</dbReference>
<dbReference type="SMART" id="SM00563">
    <property type="entry name" value="PlsC"/>
    <property type="match status" value="1"/>
</dbReference>
<dbReference type="SUPFAM" id="SSF69593">
    <property type="entry name" value="Glycerol-3-phosphate (1)-acyltransferase"/>
    <property type="match status" value="1"/>
</dbReference>
<proteinExistence type="evidence at protein level"/>
<comment type="function">
    <text evidence="1 5">Converts glycerol-3-phosphate to 1-acyl-sn-glycerol-3-phosphate (lysophosphatidic acid or LPA) by incorporating an acyl moiety at the sn-1 position of the glycerol backbone (PubMed:17170135). Also converts LPA into 1,2-diacyl-sn-glycerol-3-phosphate (phosphatidic acid or PA) by incorporating an acyl moiety at the sn-2 position of the glycerol backbone (By similarity). Protects cells against lipotoxicity (By similarity).</text>
</comment>
<comment type="catalytic activity">
    <reaction evidence="5">
        <text>sn-glycerol 3-phosphate + an acyl-CoA = a 1-acyl-sn-glycero-3-phosphate + CoA</text>
        <dbReference type="Rhea" id="RHEA:15325"/>
        <dbReference type="ChEBI" id="CHEBI:57287"/>
        <dbReference type="ChEBI" id="CHEBI:57597"/>
        <dbReference type="ChEBI" id="CHEBI:57970"/>
        <dbReference type="ChEBI" id="CHEBI:58342"/>
        <dbReference type="EC" id="2.3.1.15"/>
    </reaction>
    <physiologicalReaction direction="left-to-right" evidence="8">
        <dbReference type="Rhea" id="RHEA:15326"/>
    </physiologicalReaction>
</comment>
<comment type="catalytic activity">
    <reaction evidence="1">
        <text>a 1-acyl-sn-glycero-3-phosphate + an acyl-CoA = a 1,2-diacyl-sn-glycero-3-phosphate + CoA</text>
        <dbReference type="Rhea" id="RHEA:19709"/>
        <dbReference type="ChEBI" id="CHEBI:57287"/>
        <dbReference type="ChEBI" id="CHEBI:57970"/>
        <dbReference type="ChEBI" id="CHEBI:58342"/>
        <dbReference type="ChEBI" id="CHEBI:58608"/>
        <dbReference type="EC" id="2.3.1.51"/>
    </reaction>
    <physiologicalReaction direction="left-to-right" evidence="1">
        <dbReference type="Rhea" id="RHEA:19710"/>
    </physiologicalReaction>
</comment>
<comment type="catalytic activity">
    <reaction evidence="5">
        <text>dodecanoyl-CoA + sn-glycerol 3-phosphate = 1-dodecanoyl-sn-glycerol 3-phosphate + CoA</text>
        <dbReference type="Rhea" id="RHEA:35727"/>
        <dbReference type="ChEBI" id="CHEBI:57287"/>
        <dbReference type="ChEBI" id="CHEBI:57375"/>
        <dbReference type="ChEBI" id="CHEBI:57597"/>
        <dbReference type="ChEBI" id="CHEBI:72682"/>
    </reaction>
    <physiologicalReaction direction="left-to-right" evidence="8">
        <dbReference type="Rhea" id="RHEA:35728"/>
    </physiologicalReaction>
</comment>
<comment type="catalytic activity">
    <reaction evidence="4">
        <text>sn-glycerol 3-phosphate + hexadecanoyl-CoA = 1-hexadecanoyl-sn-glycero-3-phosphate + CoA</text>
        <dbReference type="Rhea" id="RHEA:35723"/>
        <dbReference type="ChEBI" id="CHEBI:57287"/>
        <dbReference type="ChEBI" id="CHEBI:57379"/>
        <dbReference type="ChEBI" id="CHEBI:57518"/>
        <dbReference type="ChEBI" id="CHEBI:57597"/>
    </reaction>
    <physiologicalReaction direction="left-to-right" evidence="4">
        <dbReference type="Rhea" id="RHEA:35724"/>
    </physiologicalReaction>
</comment>
<comment type="catalytic activity">
    <reaction evidence="4">
        <text>sn-glycerol 3-phosphate + (9Z)-octadecenoyl-CoA = 1-(9Z-octadecenoyl)-sn-glycero-3-phosphate + CoA</text>
        <dbReference type="Rhea" id="RHEA:37199"/>
        <dbReference type="ChEBI" id="CHEBI:57287"/>
        <dbReference type="ChEBI" id="CHEBI:57387"/>
        <dbReference type="ChEBI" id="CHEBI:57597"/>
        <dbReference type="ChEBI" id="CHEBI:74544"/>
    </reaction>
    <physiologicalReaction direction="left-to-right" evidence="4">
        <dbReference type="Rhea" id="RHEA:37200"/>
    </physiologicalReaction>
</comment>
<comment type="catalytic activity">
    <reaction evidence="1">
        <text>(9Z,12Z)-octadecadienoyl-CoA + sn-glycerol 3-phosphate = 1-(9Z,12Z)-octadecadienoyl-sn-glycero-3-phosphate + CoA</text>
        <dbReference type="Rhea" id="RHEA:37203"/>
        <dbReference type="ChEBI" id="CHEBI:57287"/>
        <dbReference type="ChEBI" id="CHEBI:57383"/>
        <dbReference type="ChEBI" id="CHEBI:57597"/>
        <dbReference type="ChEBI" id="CHEBI:74547"/>
    </reaction>
    <physiologicalReaction direction="left-to-right" evidence="1">
        <dbReference type="Rhea" id="RHEA:37204"/>
    </physiologicalReaction>
</comment>
<comment type="catalytic activity">
    <reaction evidence="1">
        <text>1-tetradecanoyl-sn-glycerol 3-phosphate + (9Z)-octadecenoyl-CoA = 1-tetradecanoyl-2-(9Z)-octadecenoyl-sn-glycero-3-phosphate + CoA</text>
        <dbReference type="Rhea" id="RHEA:37187"/>
        <dbReference type="ChEBI" id="CHEBI:57287"/>
        <dbReference type="ChEBI" id="CHEBI:57387"/>
        <dbReference type="ChEBI" id="CHEBI:72683"/>
        <dbReference type="ChEBI" id="CHEBI:74586"/>
    </reaction>
    <physiologicalReaction direction="left-to-right" evidence="1">
        <dbReference type="Rhea" id="RHEA:37188"/>
    </physiologicalReaction>
</comment>
<comment type="catalytic activity">
    <reaction evidence="1">
        <text>1-hexadecanoyl-sn-glycero-3-phosphate + (9Z)-octadecenoyl-CoA = 1-hexadecanoyl-2-(9Z-octadecenoyl)-sn-glycero-3-phosphate + CoA</text>
        <dbReference type="Rhea" id="RHEA:33187"/>
        <dbReference type="ChEBI" id="CHEBI:57287"/>
        <dbReference type="ChEBI" id="CHEBI:57387"/>
        <dbReference type="ChEBI" id="CHEBI:57518"/>
        <dbReference type="ChEBI" id="CHEBI:64839"/>
    </reaction>
    <physiologicalReaction direction="left-to-right" evidence="1">
        <dbReference type="Rhea" id="RHEA:33188"/>
    </physiologicalReaction>
</comment>
<comment type="catalytic activity">
    <reaction evidence="1">
        <text>1-(9Z-octadecenoyl)-sn-glycero-3-phosphate + (9Z)-octadecenoyl-CoA = 1,2-di-(9Z-octadecenoyl)-sn-glycero-3-phosphate + CoA</text>
        <dbReference type="Rhea" id="RHEA:37131"/>
        <dbReference type="ChEBI" id="CHEBI:57287"/>
        <dbReference type="ChEBI" id="CHEBI:57387"/>
        <dbReference type="ChEBI" id="CHEBI:74544"/>
        <dbReference type="ChEBI" id="CHEBI:74546"/>
    </reaction>
    <physiologicalReaction direction="left-to-right" evidence="1">
        <dbReference type="Rhea" id="RHEA:37132"/>
    </physiologicalReaction>
</comment>
<comment type="catalytic activity">
    <reaction evidence="1">
        <text>1-(6Z,9Z,12Z-octadecatrienoyl)-sn-glycero-3-phosphate + (9Z)-octadecenoyl-CoA = (6Z,9Z,12Z)-octadecatrienoyl-2-(9Z)-octadecenoyl-sn-glycero-3-phosphate + CoA</text>
        <dbReference type="Rhea" id="RHEA:37179"/>
        <dbReference type="ChEBI" id="CHEBI:57287"/>
        <dbReference type="ChEBI" id="CHEBI:57387"/>
        <dbReference type="ChEBI" id="CHEBI:74581"/>
        <dbReference type="ChEBI" id="CHEBI:74582"/>
    </reaction>
    <physiologicalReaction direction="left-to-right" evidence="1">
        <dbReference type="Rhea" id="RHEA:37180"/>
    </physiologicalReaction>
</comment>
<comment type="catalytic activity">
    <reaction evidence="1">
        <text>1-(9Z,12Z,15Z)-octadecatrienoyl-sn-glycero-3-phosphate + (9Z)-octadecenoyl-CoA = 1-(9Z,12Z,15Z)-octadecatrienoyl-2-(9Z)-octadecenoyl-sn-glycero-3-phosphate + CoA</text>
        <dbReference type="Rhea" id="RHEA:37139"/>
        <dbReference type="ChEBI" id="CHEBI:57287"/>
        <dbReference type="ChEBI" id="CHEBI:57387"/>
        <dbReference type="ChEBI" id="CHEBI:74549"/>
        <dbReference type="ChEBI" id="CHEBI:74550"/>
    </reaction>
    <physiologicalReaction direction="left-to-right" evidence="1">
        <dbReference type="Rhea" id="RHEA:37140"/>
    </physiologicalReaction>
</comment>
<comment type="catalytic activity">
    <reaction evidence="1">
        <text>1-(9Z-octadecenoyl)-sn-glycero-3-phosphate + tetradecanoyl-CoA = 1-(9Z)-octadecenoyl-2-tetradecanoyl-sn-glycero-3-phosphate + CoA</text>
        <dbReference type="Rhea" id="RHEA:37171"/>
        <dbReference type="ChEBI" id="CHEBI:57287"/>
        <dbReference type="ChEBI" id="CHEBI:57385"/>
        <dbReference type="ChEBI" id="CHEBI:74544"/>
        <dbReference type="ChEBI" id="CHEBI:74579"/>
    </reaction>
    <physiologicalReaction direction="left-to-right" evidence="1">
        <dbReference type="Rhea" id="RHEA:37172"/>
    </physiologicalReaction>
</comment>
<comment type="catalytic activity">
    <reaction evidence="1">
        <text>1-(9Z-octadecenoyl)-sn-glycero-3-phosphate + hexadecanoyl-CoA = 1-(9Z)-octadecenoyl-2-hexadecanoyl-sn-glycero-3-phosphate + CoA</text>
        <dbReference type="Rhea" id="RHEA:37143"/>
        <dbReference type="ChEBI" id="CHEBI:57287"/>
        <dbReference type="ChEBI" id="CHEBI:57379"/>
        <dbReference type="ChEBI" id="CHEBI:74544"/>
        <dbReference type="ChEBI" id="CHEBI:74551"/>
    </reaction>
    <physiologicalReaction direction="left-to-right" evidence="1">
        <dbReference type="Rhea" id="RHEA:37144"/>
    </physiologicalReaction>
</comment>
<comment type="catalytic activity">
    <reaction evidence="1">
        <text>1-(9Z-octadecenoyl)-sn-glycero-3-phosphate + octadecanoyl-CoA = 1-(9Z-octadecenoyl)-2-octadecanoyl-sn-glycero-3-phosphate + CoA</text>
        <dbReference type="Rhea" id="RHEA:37147"/>
        <dbReference type="ChEBI" id="CHEBI:57287"/>
        <dbReference type="ChEBI" id="CHEBI:57394"/>
        <dbReference type="ChEBI" id="CHEBI:74544"/>
        <dbReference type="ChEBI" id="CHEBI:74552"/>
    </reaction>
    <physiologicalReaction direction="left-to-right" evidence="1">
        <dbReference type="Rhea" id="RHEA:37148"/>
    </physiologicalReaction>
</comment>
<comment type="catalytic activity">
    <reaction evidence="1">
        <text>1-(9Z-octadecenoyl)-sn-glycero-3-phosphate + (9Z,12Z)-octadecadienoyl-CoA = 1-(9Z)-octadecenoyl-2-(9Z,12Z)-octadecadienoyl-sn-glycero-3-phosphate + CoA</text>
        <dbReference type="Rhea" id="RHEA:37159"/>
        <dbReference type="ChEBI" id="CHEBI:57287"/>
        <dbReference type="ChEBI" id="CHEBI:57383"/>
        <dbReference type="ChEBI" id="CHEBI:74544"/>
        <dbReference type="ChEBI" id="CHEBI:74563"/>
    </reaction>
    <physiologicalReaction direction="left-to-right" evidence="1">
        <dbReference type="Rhea" id="RHEA:37160"/>
    </physiologicalReaction>
</comment>
<comment type="catalytic activity">
    <reaction evidence="1">
        <text>1-(5Z,8Z,11Z,14Z-eicosatetraenoyl)-sn-glycero-3-phosphate + (9Z)-octadecenoyl-CoA = 1-(5Z,8Z,11Z,14Z)-eicosatetraenoyl-2-(9Z)-octadecenoyl-sn-glycero-3-phosphate + CoA</text>
        <dbReference type="Rhea" id="RHEA:37455"/>
        <dbReference type="ChEBI" id="CHEBI:57287"/>
        <dbReference type="ChEBI" id="CHEBI:57387"/>
        <dbReference type="ChEBI" id="CHEBI:74938"/>
        <dbReference type="ChEBI" id="CHEBI:74941"/>
    </reaction>
    <physiologicalReaction direction="left-to-right" evidence="1">
        <dbReference type="Rhea" id="RHEA:37456"/>
    </physiologicalReaction>
</comment>
<comment type="pathway">
    <text>Glycerolipid metabolism; triacylglycerol biosynthesis.</text>
</comment>
<comment type="pathway">
    <text>Phospholipid metabolism; CDP-diacylglycerol biosynthesis; CDP-diacylglycerol from sn-glycerol 3-phosphate: step 1/3.</text>
</comment>
<comment type="subcellular location">
    <subcellularLocation>
        <location evidence="5">Endoplasmic reticulum membrane</location>
        <topology evidence="3">Multi-pass membrane protein</topology>
    </subcellularLocation>
</comment>
<comment type="tissue specificity">
    <text evidence="5">Most abundant in epididymal fat, followed by small intestine, brown adipose tissue, kidney, heart and colon.</text>
</comment>
<comment type="induction">
    <text evidence="5">During adipocyte differentiation.</text>
</comment>
<comment type="domain">
    <text evidence="2">The HXXXXD motif is essential for acyltransferase activity and may constitute the binding site for the phosphate moiety of the glycerol-3-phosphate.</text>
</comment>
<comment type="similarity">
    <text evidence="7">Belongs to the 1-acyl-sn-glycerol-3-phosphate acyltransferase family.</text>
</comment>
<feature type="chain" id="PRO_0000291571" description="Glycerol-3-phosphate acyltransferase 3">
    <location>
        <begin position="1"/>
        <end position="438"/>
    </location>
</feature>
<feature type="transmembrane region" description="Helical" evidence="3">
    <location>
        <begin position="14"/>
        <end position="34"/>
    </location>
</feature>
<feature type="transmembrane region" description="Helical" evidence="3">
    <location>
        <begin position="137"/>
        <end position="157"/>
    </location>
</feature>
<feature type="transmembrane region" description="Helical" evidence="3">
    <location>
        <begin position="161"/>
        <end position="181"/>
    </location>
</feature>
<feature type="short sequence motif" description="HXXXXD motif" evidence="2">
    <location>
        <begin position="229"/>
        <end position="234"/>
    </location>
</feature>
<feature type="modified residue" description="Phosphoserine" evidence="9 10 11 12">
    <location>
        <position position="68"/>
    </location>
</feature>
<feature type="modified residue" description="Phosphoserine" evidence="1">
    <location>
        <position position="77"/>
    </location>
</feature>
<evidence type="ECO:0000250" key="1">
    <source>
        <dbReference type="UniProtKB" id="Q53EU6"/>
    </source>
</evidence>
<evidence type="ECO:0000250" key="2">
    <source>
        <dbReference type="UniProtKB" id="Q9D517"/>
    </source>
</evidence>
<evidence type="ECO:0000255" key="3"/>
<evidence type="ECO:0000269" key="4">
    <source>
    </source>
</evidence>
<evidence type="ECO:0000269" key="5">
    <source>
    </source>
</evidence>
<evidence type="ECO:0000303" key="6">
    <source>
    </source>
</evidence>
<evidence type="ECO:0000305" key="7"/>
<evidence type="ECO:0000305" key="8">
    <source>
    </source>
</evidence>
<evidence type="ECO:0007744" key="9">
    <source>
    </source>
</evidence>
<evidence type="ECO:0007744" key="10">
    <source>
    </source>
</evidence>
<evidence type="ECO:0007744" key="11">
    <source>
    </source>
</evidence>
<evidence type="ECO:0007744" key="12">
    <source>
    </source>
</evidence>
<accession>Q8C0N2</accession>
<accession>A6H5X0</accession>
<reference key="1">
    <citation type="journal article" date="2005" name="Science">
        <title>The transcriptional landscape of the mammalian genome.</title>
        <authorList>
            <person name="Carninci P."/>
            <person name="Kasukawa T."/>
            <person name="Katayama S."/>
            <person name="Gough J."/>
            <person name="Frith M.C."/>
            <person name="Maeda N."/>
            <person name="Oyama R."/>
            <person name="Ravasi T."/>
            <person name="Lenhard B."/>
            <person name="Wells C."/>
            <person name="Kodzius R."/>
            <person name="Shimokawa K."/>
            <person name="Bajic V.B."/>
            <person name="Brenner S.E."/>
            <person name="Batalov S."/>
            <person name="Forrest A.R."/>
            <person name="Zavolan M."/>
            <person name="Davis M.J."/>
            <person name="Wilming L.G."/>
            <person name="Aidinis V."/>
            <person name="Allen J.E."/>
            <person name="Ambesi-Impiombato A."/>
            <person name="Apweiler R."/>
            <person name="Aturaliya R.N."/>
            <person name="Bailey T.L."/>
            <person name="Bansal M."/>
            <person name="Baxter L."/>
            <person name="Beisel K.W."/>
            <person name="Bersano T."/>
            <person name="Bono H."/>
            <person name="Chalk A.M."/>
            <person name="Chiu K.P."/>
            <person name="Choudhary V."/>
            <person name="Christoffels A."/>
            <person name="Clutterbuck D.R."/>
            <person name="Crowe M.L."/>
            <person name="Dalla E."/>
            <person name="Dalrymple B.P."/>
            <person name="de Bono B."/>
            <person name="Della Gatta G."/>
            <person name="di Bernardo D."/>
            <person name="Down T."/>
            <person name="Engstrom P."/>
            <person name="Fagiolini M."/>
            <person name="Faulkner G."/>
            <person name="Fletcher C.F."/>
            <person name="Fukushima T."/>
            <person name="Furuno M."/>
            <person name="Futaki S."/>
            <person name="Gariboldi M."/>
            <person name="Georgii-Hemming P."/>
            <person name="Gingeras T.R."/>
            <person name="Gojobori T."/>
            <person name="Green R.E."/>
            <person name="Gustincich S."/>
            <person name="Harbers M."/>
            <person name="Hayashi Y."/>
            <person name="Hensch T.K."/>
            <person name="Hirokawa N."/>
            <person name="Hill D."/>
            <person name="Huminiecki L."/>
            <person name="Iacono M."/>
            <person name="Ikeo K."/>
            <person name="Iwama A."/>
            <person name="Ishikawa T."/>
            <person name="Jakt M."/>
            <person name="Kanapin A."/>
            <person name="Katoh M."/>
            <person name="Kawasawa Y."/>
            <person name="Kelso J."/>
            <person name="Kitamura H."/>
            <person name="Kitano H."/>
            <person name="Kollias G."/>
            <person name="Krishnan S.P."/>
            <person name="Kruger A."/>
            <person name="Kummerfeld S.K."/>
            <person name="Kurochkin I.V."/>
            <person name="Lareau L.F."/>
            <person name="Lazarevic D."/>
            <person name="Lipovich L."/>
            <person name="Liu J."/>
            <person name="Liuni S."/>
            <person name="McWilliam S."/>
            <person name="Madan Babu M."/>
            <person name="Madera M."/>
            <person name="Marchionni L."/>
            <person name="Matsuda H."/>
            <person name="Matsuzawa S."/>
            <person name="Miki H."/>
            <person name="Mignone F."/>
            <person name="Miyake S."/>
            <person name="Morris K."/>
            <person name="Mottagui-Tabar S."/>
            <person name="Mulder N."/>
            <person name="Nakano N."/>
            <person name="Nakauchi H."/>
            <person name="Ng P."/>
            <person name="Nilsson R."/>
            <person name="Nishiguchi S."/>
            <person name="Nishikawa S."/>
            <person name="Nori F."/>
            <person name="Ohara O."/>
            <person name="Okazaki Y."/>
            <person name="Orlando V."/>
            <person name="Pang K.C."/>
            <person name="Pavan W.J."/>
            <person name="Pavesi G."/>
            <person name="Pesole G."/>
            <person name="Petrovsky N."/>
            <person name="Piazza S."/>
            <person name="Reed J."/>
            <person name="Reid J.F."/>
            <person name="Ring B.Z."/>
            <person name="Ringwald M."/>
            <person name="Rost B."/>
            <person name="Ruan Y."/>
            <person name="Salzberg S.L."/>
            <person name="Sandelin A."/>
            <person name="Schneider C."/>
            <person name="Schoenbach C."/>
            <person name="Sekiguchi K."/>
            <person name="Semple C.A."/>
            <person name="Seno S."/>
            <person name="Sessa L."/>
            <person name="Sheng Y."/>
            <person name="Shibata Y."/>
            <person name="Shimada H."/>
            <person name="Shimada K."/>
            <person name="Silva D."/>
            <person name="Sinclair B."/>
            <person name="Sperling S."/>
            <person name="Stupka E."/>
            <person name="Sugiura K."/>
            <person name="Sultana R."/>
            <person name="Takenaka Y."/>
            <person name="Taki K."/>
            <person name="Tammoja K."/>
            <person name="Tan S.L."/>
            <person name="Tang S."/>
            <person name="Taylor M.S."/>
            <person name="Tegner J."/>
            <person name="Teichmann S.A."/>
            <person name="Ueda H.R."/>
            <person name="van Nimwegen E."/>
            <person name="Verardo R."/>
            <person name="Wei C.L."/>
            <person name="Yagi K."/>
            <person name="Yamanishi H."/>
            <person name="Zabarovsky E."/>
            <person name="Zhu S."/>
            <person name="Zimmer A."/>
            <person name="Hide W."/>
            <person name="Bult C."/>
            <person name="Grimmond S.M."/>
            <person name="Teasdale R.D."/>
            <person name="Liu E.T."/>
            <person name="Brusic V."/>
            <person name="Quackenbush J."/>
            <person name="Wahlestedt C."/>
            <person name="Mattick J.S."/>
            <person name="Hume D.A."/>
            <person name="Kai C."/>
            <person name="Sasaki D."/>
            <person name="Tomaru Y."/>
            <person name="Fukuda S."/>
            <person name="Kanamori-Katayama M."/>
            <person name="Suzuki M."/>
            <person name="Aoki J."/>
            <person name="Arakawa T."/>
            <person name="Iida J."/>
            <person name="Imamura K."/>
            <person name="Itoh M."/>
            <person name="Kato T."/>
            <person name="Kawaji H."/>
            <person name="Kawagashira N."/>
            <person name="Kawashima T."/>
            <person name="Kojima M."/>
            <person name="Kondo S."/>
            <person name="Konno H."/>
            <person name="Nakano K."/>
            <person name="Ninomiya N."/>
            <person name="Nishio T."/>
            <person name="Okada M."/>
            <person name="Plessy C."/>
            <person name="Shibata K."/>
            <person name="Shiraki T."/>
            <person name="Suzuki S."/>
            <person name="Tagami M."/>
            <person name="Waki K."/>
            <person name="Watahiki A."/>
            <person name="Okamura-Oho Y."/>
            <person name="Suzuki H."/>
            <person name="Kawai J."/>
            <person name="Hayashizaki Y."/>
        </authorList>
    </citation>
    <scope>NUCLEOTIDE SEQUENCE [LARGE SCALE MRNA]</scope>
    <source>
        <strain>C57BL/6J</strain>
        <tissue>Hypothalamus</tissue>
        <tissue>Testis</tissue>
    </source>
</reference>
<reference key="2">
    <citation type="journal article" date="2004" name="Genome Res.">
        <title>The status, quality, and expansion of the NIH full-length cDNA project: the Mammalian Gene Collection (MGC).</title>
        <authorList>
            <consortium name="The MGC Project Team"/>
        </authorList>
    </citation>
    <scope>NUCLEOTIDE SEQUENCE [LARGE SCALE MRNA]</scope>
    <source>
        <strain>CD-1</strain>
        <tissue>Brain</tissue>
        <tissue>Neural stem cell</tissue>
        <tissue>Testis</tissue>
    </source>
</reference>
<reference key="3">
    <citation type="journal article" date="2000" name="Am. J. Physiol.">
        <title>Sterol carrier protein-2 localization in endoplasmic reticulum and role in phospholipid formation.</title>
        <authorList>
            <person name="Starodub O."/>
            <person name="Jolly C.A."/>
            <person name="Atshaves B.P."/>
            <person name="Roths J.B."/>
            <person name="Murphy E.J."/>
            <person name="Kier A.B."/>
            <person name="Schroeder F."/>
        </authorList>
    </citation>
    <scope>CATALYTIC ACTIVITY</scope>
</reference>
<reference key="4">
    <citation type="journal article" date="2006" name="Proc. Natl. Acad. Sci. U.S.A.">
        <title>Molecular identification of microsomal acyl-CoA:glycerol-3-phosphate acyltransferase, a key enzyme in de novo triacylglycerol synthesis.</title>
        <authorList>
            <person name="Cao J."/>
            <person name="Li J.-L."/>
            <person name="Li D."/>
            <person name="Tobin J.F."/>
            <person name="Gimeno R.E."/>
        </authorList>
    </citation>
    <scope>FUNCTION</scope>
    <scope>CATALYTIC ACTIVITY</scope>
    <scope>SUBCELLULAR LOCATION</scope>
    <scope>TISSUE SPECIFICITY</scope>
    <scope>INDUCTION</scope>
</reference>
<reference key="5">
    <citation type="journal article" date="2007" name="Proc. Natl. Acad. Sci. U.S.A.">
        <title>Large-scale phosphorylation analysis of mouse liver.</title>
        <authorList>
            <person name="Villen J."/>
            <person name="Beausoleil S.A."/>
            <person name="Gerber S.A."/>
            <person name="Gygi S.P."/>
        </authorList>
    </citation>
    <scope>PHOSPHORYLATION [LARGE SCALE ANALYSIS] AT SER-68</scope>
    <scope>IDENTIFICATION BY MASS SPECTROMETRY [LARGE SCALE ANALYSIS]</scope>
    <source>
        <tissue>Liver</tissue>
    </source>
</reference>
<reference key="6">
    <citation type="journal article" date="2008" name="J. Proteome Res.">
        <title>Specific phosphopeptide enrichment with immobilized titanium ion affinity chromatography adsorbent for phosphoproteome analysis.</title>
        <authorList>
            <person name="Zhou H."/>
            <person name="Ye M."/>
            <person name="Dong J."/>
            <person name="Han G."/>
            <person name="Jiang X."/>
            <person name="Wu R."/>
            <person name="Zou H."/>
        </authorList>
    </citation>
    <scope>PHOSPHORYLATION [LARGE SCALE ANALYSIS] AT SER-68</scope>
    <scope>IDENTIFICATION BY MASS SPECTROMETRY [LARGE SCALE ANALYSIS]</scope>
    <source>
        <tissue>Liver</tissue>
    </source>
</reference>
<reference key="7">
    <citation type="journal article" date="2009" name="Immunity">
        <title>The phagosomal proteome in interferon-gamma-activated macrophages.</title>
        <authorList>
            <person name="Trost M."/>
            <person name="English L."/>
            <person name="Lemieux S."/>
            <person name="Courcelles M."/>
            <person name="Desjardins M."/>
            <person name="Thibault P."/>
        </authorList>
    </citation>
    <scope>PHOSPHORYLATION [LARGE SCALE ANALYSIS] AT SER-68</scope>
    <scope>IDENTIFICATION BY MASS SPECTROMETRY [LARGE SCALE ANALYSIS]</scope>
</reference>
<reference key="8">
    <citation type="journal article" date="2010" name="Cell">
        <title>A tissue-specific atlas of mouse protein phosphorylation and expression.</title>
        <authorList>
            <person name="Huttlin E.L."/>
            <person name="Jedrychowski M.P."/>
            <person name="Elias J.E."/>
            <person name="Goswami T."/>
            <person name="Rad R."/>
            <person name="Beausoleil S.A."/>
            <person name="Villen J."/>
            <person name="Haas W."/>
            <person name="Sowa M.E."/>
            <person name="Gygi S.P."/>
        </authorList>
    </citation>
    <scope>PHOSPHORYLATION [LARGE SCALE ANALYSIS] AT SER-68</scope>
    <scope>IDENTIFICATION BY MASS SPECTROMETRY [LARGE SCALE ANALYSIS]</scope>
    <source>
        <tissue>Brown adipose tissue</tissue>
        <tissue>Heart</tissue>
        <tissue>Kidney</tissue>
        <tissue>Liver</tissue>
        <tissue>Spleen</tissue>
        <tissue>Testis</tissue>
    </source>
</reference>